<feature type="chain" id="PRO_0000235706" description="Ribonuclease HII">
    <location>
        <begin position="1"/>
        <end position="214"/>
    </location>
</feature>
<feature type="domain" description="RNase H type-2" evidence="2">
    <location>
        <begin position="26"/>
        <end position="214"/>
    </location>
</feature>
<feature type="binding site" evidence="1">
    <location>
        <position position="32"/>
    </location>
    <ligand>
        <name>a divalent metal cation</name>
        <dbReference type="ChEBI" id="CHEBI:60240"/>
    </ligand>
</feature>
<feature type="binding site" evidence="1">
    <location>
        <position position="33"/>
    </location>
    <ligand>
        <name>a divalent metal cation</name>
        <dbReference type="ChEBI" id="CHEBI:60240"/>
    </ligand>
</feature>
<feature type="binding site" evidence="1">
    <location>
        <position position="124"/>
    </location>
    <ligand>
        <name>a divalent metal cation</name>
        <dbReference type="ChEBI" id="CHEBI:60240"/>
    </ligand>
</feature>
<protein>
    <recommendedName>
        <fullName evidence="1">Ribonuclease HII</fullName>
        <shortName evidence="1">RNase HII</shortName>
        <ecNumber evidence="1">3.1.26.4</ecNumber>
    </recommendedName>
</protein>
<organism>
    <name type="scientific">Burkholderia pseudomallei (strain K96243)</name>
    <dbReference type="NCBI Taxonomy" id="272560"/>
    <lineage>
        <taxon>Bacteria</taxon>
        <taxon>Pseudomonadati</taxon>
        <taxon>Pseudomonadota</taxon>
        <taxon>Betaproteobacteria</taxon>
        <taxon>Burkholderiales</taxon>
        <taxon>Burkholderiaceae</taxon>
        <taxon>Burkholderia</taxon>
        <taxon>pseudomallei group</taxon>
    </lineage>
</organism>
<sequence length="214" mass="22657">MATTRKPRGGAGGATQPALDFDAPGEIVCGVDEAGRGPLAGPVVAAAVVLDPARPIVGLDDSKALSAKKRERLFDEIVVHALAYSVASASVEEIDSLNILHATMLAMKRAVEGLSVLPTLAKIDGNRCPMLAIRSEAIVGGDALVPSISAASILAKVTRDRMLVELHQQFPMYGFDAHAGYGTPQHLAALREHGPCEHHRRSFAPVREAFDLIR</sequence>
<comment type="function">
    <text evidence="1">Endonuclease that specifically degrades the RNA of RNA-DNA hybrids.</text>
</comment>
<comment type="catalytic activity">
    <reaction evidence="1">
        <text>Endonucleolytic cleavage to 5'-phosphomonoester.</text>
        <dbReference type="EC" id="3.1.26.4"/>
    </reaction>
</comment>
<comment type="cofactor">
    <cofactor evidence="1">
        <name>Mn(2+)</name>
        <dbReference type="ChEBI" id="CHEBI:29035"/>
    </cofactor>
    <cofactor evidence="1">
        <name>Mg(2+)</name>
        <dbReference type="ChEBI" id="CHEBI:18420"/>
    </cofactor>
    <text evidence="1">Manganese or magnesium. Binds 1 divalent metal ion per monomer in the absence of substrate. May bind a second metal ion after substrate binding.</text>
</comment>
<comment type="subcellular location">
    <subcellularLocation>
        <location evidence="1">Cytoplasm</location>
    </subcellularLocation>
</comment>
<comment type="similarity">
    <text evidence="1">Belongs to the RNase HII family.</text>
</comment>
<gene>
    <name evidence="1" type="primary">rnhB</name>
    <name type="ordered locus">BPSL2145</name>
</gene>
<reference key="1">
    <citation type="journal article" date="2004" name="Proc. Natl. Acad. Sci. U.S.A.">
        <title>Genomic plasticity of the causative agent of melioidosis, Burkholderia pseudomallei.</title>
        <authorList>
            <person name="Holden M.T.G."/>
            <person name="Titball R.W."/>
            <person name="Peacock S.J."/>
            <person name="Cerdeno-Tarraga A.-M."/>
            <person name="Atkins T."/>
            <person name="Crossman L.C."/>
            <person name="Pitt T."/>
            <person name="Churcher C."/>
            <person name="Mungall K.L."/>
            <person name="Bentley S.D."/>
            <person name="Sebaihia M."/>
            <person name="Thomson N.R."/>
            <person name="Bason N."/>
            <person name="Beacham I.R."/>
            <person name="Brooks K."/>
            <person name="Brown K.A."/>
            <person name="Brown N.F."/>
            <person name="Challis G.L."/>
            <person name="Cherevach I."/>
            <person name="Chillingworth T."/>
            <person name="Cronin A."/>
            <person name="Crossett B."/>
            <person name="Davis P."/>
            <person name="DeShazer D."/>
            <person name="Feltwell T."/>
            <person name="Fraser A."/>
            <person name="Hance Z."/>
            <person name="Hauser H."/>
            <person name="Holroyd S."/>
            <person name="Jagels K."/>
            <person name="Keith K.E."/>
            <person name="Maddison M."/>
            <person name="Moule S."/>
            <person name="Price C."/>
            <person name="Quail M.A."/>
            <person name="Rabbinowitsch E."/>
            <person name="Rutherford K."/>
            <person name="Sanders M."/>
            <person name="Simmonds M."/>
            <person name="Songsivilai S."/>
            <person name="Stevens K."/>
            <person name="Tumapa S."/>
            <person name="Vesaratchavest M."/>
            <person name="Whitehead S."/>
            <person name="Yeats C."/>
            <person name="Barrell B.G."/>
            <person name="Oyston P.C.F."/>
            <person name="Parkhill J."/>
        </authorList>
    </citation>
    <scope>NUCLEOTIDE SEQUENCE [LARGE SCALE GENOMIC DNA]</scope>
    <source>
        <strain>K96243</strain>
    </source>
</reference>
<name>RNH2_BURPS</name>
<keyword id="KW-0963">Cytoplasm</keyword>
<keyword id="KW-0255">Endonuclease</keyword>
<keyword id="KW-0378">Hydrolase</keyword>
<keyword id="KW-0464">Manganese</keyword>
<keyword id="KW-0479">Metal-binding</keyword>
<keyword id="KW-0540">Nuclease</keyword>
<keyword id="KW-1185">Reference proteome</keyword>
<dbReference type="EC" id="3.1.26.4" evidence="1"/>
<dbReference type="EMBL" id="BX571965">
    <property type="protein sequence ID" value="CAH36147.1"/>
    <property type="molecule type" value="Genomic_DNA"/>
</dbReference>
<dbReference type="RefSeq" id="WP_004534532.1">
    <property type="nucleotide sequence ID" value="NZ_CP009538.1"/>
</dbReference>
<dbReference type="RefSeq" id="YP_108740.1">
    <property type="nucleotide sequence ID" value="NC_006350.1"/>
</dbReference>
<dbReference type="SMR" id="Q63T26"/>
<dbReference type="STRING" id="272560.BPSL2145"/>
<dbReference type="KEGG" id="bps:BPSL2145"/>
<dbReference type="PATRIC" id="fig|272560.51.peg.3308"/>
<dbReference type="eggNOG" id="COG0164">
    <property type="taxonomic scope" value="Bacteria"/>
</dbReference>
<dbReference type="Proteomes" id="UP000000605">
    <property type="component" value="Chromosome 1"/>
</dbReference>
<dbReference type="GO" id="GO:0005737">
    <property type="term" value="C:cytoplasm"/>
    <property type="evidence" value="ECO:0007669"/>
    <property type="project" value="UniProtKB-SubCell"/>
</dbReference>
<dbReference type="GO" id="GO:0032299">
    <property type="term" value="C:ribonuclease H2 complex"/>
    <property type="evidence" value="ECO:0007669"/>
    <property type="project" value="TreeGrafter"/>
</dbReference>
<dbReference type="GO" id="GO:0030145">
    <property type="term" value="F:manganese ion binding"/>
    <property type="evidence" value="ECO:0007669"/>
    <property type="project" value="UniProtKB-UniRule"/>
</dbReference>
<dbReference type="GO" id="GO:0003723">
    <property type="term" value="F:RNA binding"/>
    <property type="evidence" value="ECO:0007669"/>
    <property type="project" value="InterPro"/>
</dbReference>
<dbReference type="GO" id="GO:0004523">
    <property type="term" value="F:RNA-DNA hybrid ribonuclease activity"/>
    <property type="evidence" value="ECO:0007669"/>
    <property type="project" value="UniProtKB-UniRule"/>
</dbReference>
<dbReference type="GO" id="GO:0043137">
    <property type="term" value="P:DNA replication, removal of RNA primer"/>
    <property type="evidence" value="ECO:0007669"/>
    <property type="project" value="TreeGrafter"/>
</dbReference>
<dbReference type="GO" id="GO:0006298">
    <property type="term" value="P:mismatch repair"/>
    <property type="evidence" value="ECO:0007669"/>
    <property type="project" value="TreeGrafter"/>
</dbReference>
<dbReference type="CDD" id="cd07182">
    <property type="entry name" value="RNase_HII_bacteria_HII_like"/>
    <property type="match status" value="1"/>
</dbReference>
<dbReference type="FunFam" id="3.30.420.10:FF:000006">
    <property type="entry name" value="Ribonuclease HII"/>
    <property type="match status" value="1"/>
</dbReference>
<dbReference type="Gene3D" id="3.30.420.10">
    <property type="entry name" value="Ribonuclease H-like superfamily/Ribonuclease H"/>
    <property type="match status" value="1"/>
</dbReference>
<dbReference type="HAMAP" id="MF_00052_B">
    <property type="entry name" value="RNase_HII_B"/>
    <property type="match status" value="1"/>
</dbReference>
<dbReference type="InterPro" id="IPR022898">
    <property type="entry name" value="RNase_HII"/>
</dbReference>
<dbReference type="InterPro" id="IPR001352">
    <property type="entry name" value="RNase_HII/HIII"/>
</dbReference>
<dbReference type="InterPro" id="IPR024567">
    <property type="entry name" value="RNase_HII/HIII_dom"/>
</dbReference>
<dbReference type="InterPro" id="IPR012337">
    <property type="entry name" value="RNaseH-like_sf"/>
</dbReference>
<dbReference type="InterPro" id="IPR036397">
    <property type="entry name" value="RNaseH_sf"/>
</dbReference>
<dbReference type="NCBIfam" id="NF000594">
    <property type="entry name" value="PRK00015.1-1"/>
    <property type="match status" value="1"/>
</dbReference>
<dbReference type="NCBIfam" id="NF000595">
    <property type="entry name" value="PRK00015.1-3"/>
    <property type="match status" value="1"/>
</dbReference>
<dbReference type="NCBIfam" id="NF000596">
    <property type="entry name" value="PRK00015.1-4"/>
    <property type="match status" value="1"/>
</dbReference>
<dbReference type="PANTHER" id="PTHR10954">
    <property type="entry name" value="RIBONUCLEASE H2 SUBUNIT A"/>
    <property type="match status" value="1"/>
</dbReference>
<dbReference type="PANTHER" id="PTHR10954:SF18">
    <property type="entry name" value="RIBONUCLEASE HII"/>
    <property type="match status" value="1"/>
</dbReference>
<dbReference type="Pfam" id="PF01351">
    <property type="entry name" value="RNase_HII"/>
    <property type="match status" value="1"/>
</dbReference>
<dbReference type="SUPFAM" id="SSF53098">
    <property type="entry name" value="Ribonuclease H-like"/>
    <property type="match status" value="1"/>
</dbReference>
<dbReference type="PROSITE" id="PS51975">
    <property type="entry name" value="RNASE_H_2"/>
    <property type="match status" value="1"/>
</dbReference>
<evidence type="ECO:0000255" key="1">
    <source>
        <dbReference type="HAMAP-Rule" id="MF_00052"/>
    </source>
</evidence>
<evidence type="ECO:0000255" key="2">
    <source>
        <dbReference type="PROSITE-ProRule" id="PRU01319"/>
    </source>
</evidence>
<accession>Q63T26</accession>
<proteinExistence type="inferred from homology"/>